<reference key="1">
    <citation type="journal article" date="1986" name="Nature">
        <title>A new acute transforming feline retrovirus and relationship of its oncogene v-kit with the protein kinase gene family.</title>
        <authorList>
            <person name="Besmer P."/>
            <person name="Murphy J.E."/>
            <person name="George P.C."/>
            <person name="Qiu F."/>
            <person name="Bergold P.J."/>
            <person name="Lederman L."/>
            <person name="Snyder H.W. Jr."/>
            <person name="Brodeur D."/>
            <person name="Zuckerman E.E."/>
            <person name="Hardy W.D."/>
        </authorList>
    </citation>
    <scope>NUCLEOTIDE SEQUENCE [GENOMIC DNA]</scope>
</reference>
<organismHost>
    <name type="scientific">Felidae</name>
    <name type="common">cat family</name>
    <dbReference type="NCBI Taxonomy" id="9681"/>
</organismHost>
<dbReference type="EMBL" id="X03711">
    <property type="protein sequence ID" value="CAA27339.1"/>
    <property type="status" value="ALT_SEQ"/>
    <property type="molecule type" value="Genomic_DNA"/>
</dbReference>
<dbReference type="PIR" id="A03936">
    <property type="entry name" value="FOMVHZ"/>
</dbReference>
<dbReference type="SMR" id="P04322"/>
<dbReference type="Proteomes" id="UP000242259">
    <property type="component" value="Genome"/>
</dbReference>
<dbReference type="GO" id="GO:0020002">
    <property type="term" value="C:host cell plasma membrane"/>
    <property type="evidence" value="ECO:0007669"/>
    <property type="project" value="UniProtKB-SubCell"/>
</dbReference>
<dbReference type="GO" id="GO:0016020">
    <property type="term" value="C:membrane"/>
    <property type="evidence" value="ECO:0007669"/>
    <property type="project" value="UniProtKB-KW"/>
</dbReference>
<dbReference type="GO" id="GO:0019028">
    <property type="term" value="C:viral capsid"/>
    <property type="evidence" value="ECO:0007669"/>
    <property type="project" value="UniProtKB-KW"/>
</dbReference>
<dbReference type="GO" id="GO:0003723">
    <property type="term" value="F:RNA binding"/>
    <property type="evidence" value="ECO:0007669"/>
    <property type="project" value="UniProtKB-KW"/>
</dbReference>
<dbReference type="GO" id="GO:0039660">
    <property type="term" value="F:structural constituent of virion"/>
    <property type="evidence" value="ECO:0007669"/>
    <property type="project" value="UniProtKB-KW"/>
</dbReference>
<dbReference type="GO" id="GO:0039702">
    <property type="term" value="P:viral budding via host ESCRT complex"/>
    <property type="evidence" value="ECO:0007669"/>
    <property type="project" value="UniProtKB-KW"/>
</dbReference>
<dbReference type="Gene3D" id="1.10.150.180">
    <property type="entry name" value="Gamma-retroviral matrix domain"/>
    <property type="match status" value="1"/>
</dbReference>
<dbReference type="Gene3D" id="1.10.375.10">
    <property type="entry name" value="Human Immunodeficiency Virus Type 1 Capsid Protein"/>
    <property type="match status" value="1"/>
</dbReference>
<dbReference type="InterPro" id="IPR000840">
    <property type="entry name" value="G_retro_matrix"/>
</dbReference>
<dbReference type="InterPro" id="IPR036946">
    <property type="entry name" value="G_retro_matrix_sf"/>
</dbReference>
<dbReference type="InterPro" id="IPR002079">
    <property type="entry name" value="Gag_p12"/>
</dbReference>
<dbReference type="InterPro" id="IPR003036">
    <property type="entry name" value="Gag_P30"/>
</dbReference>
<dbReference type="InterPro" id="IPR008919">
    <property type="entry name" value="Retrov_capsid_N"/>
</dbReference>
<dbReference type="InterPro" id="IPR050462">
    <property type="entry name" value="Retroviral_Gag-Pol_poly"/>
</dbReference>
<dbReference type="InterPro" id="IPR010999">
    <property type="entry name" value="Retrovr_matrix"/>
</dbReference>
<dbReference type="PANTHER" id="PTHR33166">
    <property type="entry name" value="GAG_P30 DOMAIN-CONTAINING PROTEIN"/>
    <property type="match status" value="1"/>
</dbReference>
<dbReference type="Pfam" id="PF01140">
    <property type="entry name" value="Gag_MA"/>
    <property type="match status" value="1"/>
</dbReference>
<dbReference type="Pfam" id="PF01141">
    <property type="entry name" value="Gag_p12"/>
    <property type="match status" value="1"/>
</dbReference>
<dbReference type="Pfam" id="PF02093">
    <property type="entry name" value="Gag_p30"/>
    <property type="match status" value="1"/>
</dbReference>
<dbReference type="SUPFAM" id="SSF47836">
    <property type="entry name" value="Retroviral matrix proteins"/>
    <property type="match status" value="1"/>
</dbReference>
<dbReference type="SUPFAM" id="SSF47943">
    <property type="entry name" value="Retrovirus capsid protein, N-terminal core domain"/>
    <property type="match status" value="1"/>
</dbReference>
<evidence type="ECO:0000250" key="1"/>
<evidence type="ECO:0000250" key="2">
    <source>
        <dbReference type="UniProtKB" id="P03332"/>
    </source>
</evidence>
<evidence type="ECO:0000250" key="3">
    <source>
        <dbReference type="UniProtKB" id="P03336"/>
    </source>
</evidence>
<evidence type="ECO:0000255" key="4"/>
<evidence type="ECO:0000256" key="5">
    <source>
        <dbReference type="SAM" id="MobiDB-lite"/>
    </source>
</evidence>
<evidence type="ECO:0000305" key="6"/>
<name>GAG_FSVHZ</name>
<keyword id="KW-0024">Alternative initiation</keyword>
<keyword id="KW-0167">Capsid protein</keyword>
<keyword id="KW-1032">Host cell membrane</keyword>
<keyword id="KW-1043">Host membrane</keyword>
<keyword id="KW-0945">Host-virus interaction</keyword>
<keyword id="KW-0449">Lipoprotein</keyword>
<keyword id="KW-0472">Membrane</keyword>
<keyword id="KW-0519">Myristate</keyword>
<keyword id="KW-0694">RNA-binding</keyword>
<keyword id="KW-1198">Viral budding</keyword>
<keyword id="KW-1187">Viral budding via the host ESCRT complexes</keyword>
<keyword id="KW-0468">Viral matrix protein</keyword>
<keyword id="KW-1188">Viral release from host cell</keyword>
<keyword id="KW-0946">Virion</keyword>
<protein>
    <recommendedName>
        <fullName>Gag polyprotein</fullName>
    </recommendedName>
    <alternativeName>
        <fullName>Core polyprotein</fullName>
    </alternativeName>
    <component>
        <recommendedName>
            <fullName>Matrix protein p15</fullName>
            <shortName>MA</shortName>
        </recommendedName>
    </component>
    <component>
        <recommendedName>
            <fullName>RNA-binding phosphoprotein p12</fullName>
        </recommendedName>
        <alternativeName>
            <fullName>pp12</fullName>
        </alternativeName>
    </component>
    <component>
        <recommendedName>
            <fullName>Capsid protein p30</fullName>
            <shortName>CA</shortName>
        </recommendedName>
    </component>
</protein>
<proteinExistence type="inferred from homology"/>
<accession>P04322</accession>
<organism>
    <name type="scientific">Feline sarcoma virus (strain Hardy-Zuckerman 4)</name>
    <dbReference type="NCBI Taxonomy" id="11777"/>
    <lineage>
        <taxon>Viruses</taxon>
        <taxon>Riboviria</taxon>
        <taxon>Pararnavirae</taxon>
        <taxon>Artverviricota</taxon>
        <taxon>Revtraviricetes</taxon>
        <taxon>Ortervirales</taxon>
        <taxon>Retroviridae</taxon>
        <taxon>Orthoretrovirinae</taxon>
        <taxon>Gammaretrovirus</taxon>
        <taxon>Hardy-Zuckerman feline sarcoma virus</taxon>
    </lineage>
</organism>
<comment type="function">
    <molecule>Gag polyprotein</molecule>
    <text evidence="2">Plays a role in budding and is processed by the viral protease during virion maturation outside the cell. During budding, it recruits, in a PPXY-dependent or independent manner, Nedd4-like ubiquitin ligases that conjugate ubiquitin molecules to Gag, or to Gag binding host factors. Interaction with HECT ubiquitin ligases probably link the viral protein to the host ESCRT pathway and facilitate release.</text>
</comment>
<comment type="function">
    <molecule>Matrix protein p15</molecule>
    <text evidence="2">Targets Gag and gag-pol polyproteins to the plasma membrane via a multipartite membrane binding signal, that includes its myristoylated N-terminus. Also mediates nuclear localization of the pre-integration complex.</text>
</comment>
<comment type="function">
    <molecule>RNA-binding phosphoprotein p12</molecule>
    <text evidence="2">Constituent of the pre-integration complex (PIC) which tethers the latter to mitotic chromosomes.</text>
</comment>
<comment type="function">
    <molecule>Capsid protein p30</molecule>
    <text evidence="3">Forms the spherical core of the virion that encapsulates the genomic RNA-nucleocapsid complex.</text>
</comment>
<comment type="subunit">
    <molecule>Gag polyprotein</molecule>
    <text evidence="2">Interacts (via PPXY motif) with host NEDD4 (By similarity). Interacts (via PSAP motif) with host TSG101 (By similarity).</text>
</comment>
<comment type="subunit">
    <molecule>Capsid protein p30</molecule>
    <text evidence="2">Homohexamer. Further associates as homomultimer. The virus core is composed of a lattice formed from hexagonal rings, each containing six capsid monomers.</text>
</comment>
<comment type="subcellular location">
    <molecule>Gag polyprotein</molecule>
    <subcellularLocation>
        <location evidence="1">Virion</location>
    </subcellularLocation>
    <subcellularLocation>
        <location evidence="6">Host cell membrane</location>
        <topology evidence="6">Lipid-anchor</topology>
    </subcellularLocation>
</comment>
<comment type="subcellular location">
    <molecule>Matrix protein p15</molecule>
    <subcellularLocation>
        <location evidence="6">Virion</location>
    </subcellularLocation>
</comment>
<comment type="subcellular location">
    <molecule>Capsid protein p30</molecule>
    <subcellularLocation>
        <location evidence="6">Virion</location>
    </subcellularLocation>
</comment>
<comment type="alternative products">
    <event type="alternative initiation"/>
    <isoform>
        <id>P04322-1</id>
        <name>Gag polyprotein</name>
        <sequence type="displayed"/>
    </isoform>
    <isoform>
        <id>P0DP83-1</id>
        <name>Glyco-Gag protein</name>
        <sequence type="external"/>
    </isoform>
</comment>
<comment type="domain">
    <molecule>Gag polyprotein</molecule>
    <text evidence="2">Late-budding domains (L domains) are short sequence motifs essential for viral particle budding. They recruit proteins of the host ESCRT machinery (Endosomal Sorting Complex Required for Transport) or ESCRT-associated proteins. RNA-binding phosphoprotein p12 contains one L domain: a PPXY motif which potentially interacts with the WW domain 3 of NEDD4 E3 ubiquitin ligase. Matrix protein p15 contains one L domain: a PTAP/PSAP motif, which potentially interacts with the UEV domain of TSG101.</text>
</comment>
<comment type="PTM">
    <molecule>Gag polyprotein</molecule>
    <text evidence="2">Specific enzymatic cleavages by the viral protease yield mature proteins. The protease is released by autocatalytic cleavage. The polyprotein is cleaved during and after budding, this process is termed maturation.</text>
</comment>
<comment type="miscellaneous">
    <text>This protein is synthesized as a Gag-Kit-Pol polyprotein.</text>
</comment>
<comment type="sequence caution" evidence="3">
    <conflict type="erroneous gene model prediction">
        <sequence resource="EMBL-CDS" id="CAA27339"/>
    </conflict>
</comment>
<feature type="initiator methionine" description="Removed; by host" evidence="1">
    <location>
        <position position="1"/>
    </location>
</feature>
<feature type="chain" id="PRO_0000390801" description="Gag polyprotein">
    <location>
        <begin position="2"/>
        <end position="340" status="greater than"/>
    </location>
</feature>
<feature type="chain" id="PRO_0000040848" description="Matrix protein p15" evidence="4">
    <location>
        <begin position="2"/>
        <end position="127"/>
    </location>
</feature>
<feature type="chain" id="PRO_0000040849" description="RNA-binding phosphoprotein p12" evidence="4">
    <location>
        <begin position="128"/>
        <end position="197"/>
    </location>
</feature>
<feature type="chain" id="PRO_0000040850" description="Capsid protein p30" evidence="4">
    <location>
        <begin position="198"/>
        <end position="340" status="greater than"/>
    </location>
</feature>
<feature type="region of interest" description="Disordered" evidence="5">
    <location>
        <begin position="97"/>
        <end position="208"/>
    </location>
</feature>
<feature type="short sequence motif" description="PTAP/PSAP motif">
    <location>
        <begin position="118"/>
        <end position="121"/>
    </location>
</feature>
<feature type="short sequence motif" description="LYPX(n)L motif">
    <location>
        <begin position="126"/>
        <end position="130"/>
    </location>
</feature>
<feature type="short sequence motif" description="PPXY motif">
    <location>
        <begin position="157"/>
        <end position="160"/>
    </location>
</feature>
<feature type="compositionally biased region" description="Pro residues" evidence="5">
    <location>
        <begin position="100"/>
        <end position="119"/>
    </location>
</feature>
<feature type="compositionally biased region" description="Low complexity" evidence="5">
    <location>
        <begin position="120"/>
        <end position="132"/>
    </location>
</feature>
<feature type="compositionally biased region" description="Pro residues" evidence="5">
    <location>
        <begin position="136"/>
        <end position="146"/>
    </location>
</feature>
<feature type="site" description="Cleavage; by viral protease" evidence="1">
    <location>
        <begin position="127"/>
        <end position="128"/>
    </location>
</feature>
<feature type="site" description="Cleavage; by viral protease" evidence="1">
    <location>
        <begin position="197"/>
        <end position="198"/>
    </location>
</feature>
<feature type="lipid moiety-binding region" description="N-myristoyl glycine; by host" evidence="1">
    <location>
        <position position="2"/>
    </location>
</feature>
<feature type="non-terminal residue">
    <location>
        <position position="340"/>
    </location>
</feature>
<sequence>MGQTIATPLSLTLDHWSEVRARAHNQGVEVRKKKWVTLCEAEWVMMNVGWPREGTFSLDNISQVEKKIFAPGPYGHPDQVPYITTWRSLATDPPSWVRPFLPPPKPPTPLPQPLSPQPSAPLTSSLYPVLPKTDPPKPPVLPPDPSSPLIDLLTEEPPPYPGGHGPLPSGPRTPTASPIASRLRERRENPAEESQALPLREGPNNRPQYWPFSASDLYNWKSHNPPFSQDPVALTNLIESILVTHQPTWDDCQQLLQALLTGEERQRVLLEARKQVPGEDGRPTQLPNVIDETFPLTRPNWDFATPAGREHLRLYRQLLLAGLRGAARRPTNLAQVKQVV</sequence>
<gene>
    <name type="primary">gag</name>
</gene>